<evidence type="ECO:0000250" key="1">
    <source>
        <dbReference type="UniProtKB" id="P24385"/>
    </source>
</evidence>
<evidence type="ECO:0000250" key="2">
    <source>
        <dbReference type="UniProtKB" id="P25322"/>
    </source>
</evidence>
<evidence type="ECO:0000256" key="3">
    <source>
        <dbReference type="SAM" id="MobiDB-lite"/>
    </source>
</evidence>
<evidence type="ECO:0000305" key="4"/>
<proteinExistence type="evidence at transcript level"/>
<organism>
    <name type="scientific">Rattus norvegicus</name>
    <name type="common">Rat</name>
    <dbReference type="NCBI Taxonomy" id="10116"/>
    <lineage>
        <taxon>Eukaryota</taxon>
        <taxon>Metazoa</taxon>
        <taxon>Chordata</taxon>
        <taxon>Craniata</taxon>
        <taxon>Vertebrata</taxon>
        <taxon>Euteleostomi</taxon>
        <taxon>Mammalia</taxon>
        <taxon>Eutheria</taxon>
        <taxon>Euarchontoglires</taxon>
        <taxon>Glires</taxon>
        <taxon>Rodentia</taxon>
        <taxon>Myomorpha</taxon>
        <taxon>Muroidea</taxon>
        <taxon>Muridae</taxon>
        <taxon>Murinae</taxon>
        <taxon>Rattus</taxon>
    </lineage>
</organism>
<feature type="chain" id="PRO_0000080433" description="G1/S-specific cyclin-D1">
    <location>
        <begin position="1"/>
        <end position="295"/>
    </location>
</feature>
<feature type="domain" description="Cyclin N-terminal">
    <location>
        <begin position="28"/>
        <end position="152"/>
    </location>
</feature>
<feature type="region of interest" description="Disordered" evidence="3">
    <location>
        <begin position="269"/>
        <end position="295"/>
    </location>
</feature>
<feature type="modified residue" description="Phosphothreonine" evidence="1">
    <location>
        <position position="286"/>
    </location>
</feature>
<feature type="cross-link" description="Glycyl lysine isopeptide (Lys-Gly) (interchain with G-Cter in ubiquitin)" evidence="2">
    <location>
        <position position="269"/>
    </location>
</feature>
<feature type="sequence conflict" description="In Ref. 1; BAA03115." evidence="4" ref="1">
    <original>DRV</original>
    <variation>RPG</variation>
    <location>
        <begin position="25"/>
        <end position="27"/>
    </location>
</feature>
<name>CCND1_RAT</name>
<protein>
    <recommendedName>
        <fullName>G1/S-specific cyclin-D1</fullName>
    </recommendedName>
</protein>
<gene>
    <name type="primary">Ccnd1</name>
</gene>
<sequence length="295" mass="33483">MEHQLLCCEVETIRRAYPDTNLLNDRVLRAMLKTEETCAPSVSYFKCVQREIVPSMRKIVATWMLEVCEEQKCEEEVFPLAMNYLDRFLSLEPLKKSRLQLLGATCMFVASKMKETIPLTAEKLCIYTDNSIRPEELLQMELLLVNKLKWNLAAMTPHDFIEHFLSKMPEADENKQIIRKHAQTFVALCATDVKFISNPPSMVAAGSVVAAMQGLNLGSPNNFLSCYRTTHFLSRVIKCDPDCLRACQEQIEALLESSLRQAQQNIDPKATEEEGEVEEEAGLACTPTDVRDVDI</sequence>
<comment type="function">
    <text evidence="1">Regulatory component of the cyclin D1-CDK4 (DC) complex that phosphorylates and inhibits members of the retinoblastoma (RB) protein family including RB1 and regulates the cell-cycle during G(1)/S transition. Phosphorylation of RB1 allows dissociation of the transcription factor E2F from the RB/E2F complex and the subsequent transcription of E2F target genes which are responsible for the progression through the G(1) phase. Hypophosphorylates RB1 in early G(1) phase. Cyclin D-CDK4 complexes are major integrators of various mitogenenic and antimitogenic signals. Also a substrate for SMAD3, phosphorylating SMAD3 in a cell-cycle-dependent manner and repressing its transcriptional activity. Component of the ternary complex, cyclin D1/CDK4/CDKN1B, required for nuclear translocation and activity of the cyclin D-CDK4 complex. Exhibits transcriptional corepressor activity with INSM1 on the NEUROD1 and INS promoters in a cell cycle-independent manner.</text>
</comment>
<comment type="subunit">
    <text evidence="1 2">Interacts with either CDK4 or CDK6 protein kinase to form a serine/threonine kinase holoenzyme complex. The cyclin subunit imparts substrate specificity to the complex. Component of the ternary complex CCND1/CDK4/CDKN1B required for nuclear translocation and modulation of CDK4-mediated kinase activity (By similarity). Interacts directly with CDKN1B. Can form similar complexes with either CDKN1A or CDKN2A. Interacts with UHRF2; the interaction ubiquitinates CCND1 and appears to occur independently of phosphorylation. Interacts with USP2. Interacts (via cyclin N-terminal domain) with INSM1 (via N-terminal region); the interaction competes with the binding of CCND1 to CDK4 during cell cycle progression and inhibits CDK4 activity. Interacts with CDK4; the interaction is prevented with the binding of CCND1 to INSM1 during cell cycle progression (By similarity).</text>
</comment>
<comment type="subcellular location">
    <subcellularLocation>
        <location evidence="1">Nucleus</location>
    </subcellularLocation>
    <subcellularLocation>
        <location evidence="1">Cytoplasm</location>
    </subcellularLocation>
    <subcellularLocation>
        <location evidence="1">Nucleus membrane</location>
    </subcellularLocation>
    <text evidence="1">Cyclin D-CDK4 complexes accumulate at the nuclear membrane and are then translocated into the nucleus through interaction with KIP/CIP family members.</text>
</comment>
<comment type="PTM">
    <text evidence="1">Phosphorylation at Thr-286 by MAP kinases is required for ubiquitination and degradation by the DCX(AMBRA1) complex. It also plays an essential role for recognition by the FBXO31 component of SCF (SKP1-cullin-F-box) protein ligase complex following DNA damage.</text>
</comment>
<comment type="PTM">
    <text evidence="1 2">Ubiquitinated at Lys-269 by the DCX(AMBRA1) complex during the transition from G1 to S cell phase, leading to its degradation: ubiquitination is dependent on Thr-286 phosphorylation. The DCX(AMBRA1) complex represents the major regulator of CCND1 stability during the G1/S transition (By similarity). Also ubiquitinated by the SCF(FBXO4) and Cul7-RING(FBXW8) ubiquitin-protein ligase complexes (By similarity). Following DNA damage it is ubiquitinated by the SCF(FBXO31) protein ligase complex. SCF(FBXO31) ubiquitination is dependent on Thr-286 phosphorylation. Ubiquitinated also by UHRF2 apparently in a phosphorylation-independent manner. Ubiquitination leads to its degradation and G1 arrest. Deubiquitinated by USP2; leading to its stabilization (By similarity).</text>
</comment>
<comment type="similarity">
    <text evidence="4">Belongs to the cyclin family. Cyclin D subfamily.</text>
</comment>
<dbReference type="EMBL" id="D14014">
    <property type="protein sequence ID" value="BAA03115.1"/>
    <property type="molecule type" value="mRNA"/>
</dbReference>
<dbReference type="EMBL" id="X75207">
    <property type="protein sequence ID" value="CAA53020.1"/>
    <property type="molecule type" value="mRNA"/>
</dbReference>
<dbReference type="PIR" id="JC2342">
    <property type="entry name" value="JC2342"/>
</dbReference>
<dbReference type="RefSeq" id="NP_741989.3">
    <property type="nucleotide sequence ID" value="NM_171992.4"/>
</dbReference>
<dbReference type="SMR" id="P39948"/>
<dbReference type="ComplexPortal" id="CPX-2075">
    <property type="entry name" value="Cyclin D1-CDK4 complex"/>
</dbReference>
<dbReference type="FunCoup" id="P39948">
    <property type="interactions" value="1859"/>
</dbReference>
<dbReference type="IntAct" id="P39948">
    <property type="interactions" value="1"/>
</dbReference>
<dbReference type="STRING" id="10116.ENSRNOP00000028411"/>
<dbReference type="iPTMnet" id="P39948"/>
<dbReference type="PhosphoSitePlus" id="P39948"/>
<dbReference type="PaxDb" id="10116-ENSRNOP00000028411"/>
<dbReference type="Ensembl" id="ENSRNOT00000108193.1">
    <property type="protein sequence ID" value="ENSRNOP00000083271.1"/>
    <property type="gene ID" value="ENSRNOG00000020918.6"/>
</dbReference>
<dbReference type="GeneID" id="58919"/>
<dbReference type="KEGG" id="rno:58919"/>
<dbReference type="UCSC" id="RGD:68384">
    <property type="organism name" value="rat"/>
</dbReference>
<dbReference type="AGR" id="RGD:68384"/>
<dbReference type="CTD" id="595"/>
<dbReference type="RGD" id="68384">
    <property type="gene designation" value="Ccnd1"/>
</dbReference>
<dbReference type="eggNOG" id="KOG0656">
    <property type="taxonomic scope" value="Eukaryota"/>
</dbReference>
<dbReference type="GeneTree" id="ENSGT00940000157816"/>
<dbReference type="HOGENOM" id="CLU_052190_0_0_1"/>
<dbReference type="InParanoid" id="P39948"/>
<dbReference type="OrthoDB" id="306099at2759"/>
<dbReference type="PhylomeDB" id="P39948"/>
<dbReference type="TreeFam" id="TF101004"/>
<dbReference type="Reactome" id="R-RNO-187577">
    <property type="pathway name" value="SCF(Skp2)-mediated degradation of p27/p21"/>
</dbReference>
<dbReference type="Reactome" id="R-RNO-3214858">
    <property type="pathway name" value="RMTs methylate histone arginines"/>
</dbReference>
<dbReference type="Reactome" id="R-RNO-69231">
    <property type="pathway name" value="Cyclin D associated events in G1"/>
</dbReference>
<dbReference type="Reactome" id="R-RNO-75815">
    <property type="pathway name" value="Ubiquitin-dependent degradation of Cyclin D"/>
</dbReference>
<dbReference type="Reactome" id="R-RNO-8849470">
    <property type="pathway name" value="PTK6 Regulates Cell Cycle"/>
</dbReference>
<dbReference type="Reactome" id="R-RNO-8934593">
    <property type="pathway name" value="Regulation of RUNX1 Expression and Activity"/>
</dbReference>
<dbReference type="Reactome" id="R-RNO-8951936">
    <property type="pathway name" value="RUNX3 regulates p14-ARF"/>
</dbReference>
<dbReference type="Reactome" id="R-RNO-9754119">
    <property type="pathway name" value="Drug-mediated inhibition of CDK4/CDK6 activity"/>
</dbReference>
<dbReference type="PRO" id="PR:P39948"/>
<dbReference type="Proteomes" id="UP000002494">
    <property type="component" value="Chromosome 1"/>
</dbReference>
<dbReference type="Bgee" id="ENSRNOG00000020918">
    <property type="expression patterns" value="Expressed in lung and 19 other cell types or tissues"/>
</dbReference>
<dbReference type="ExpressionAtlas" id="P39948">
    <property type="expression patterns" value="baseline and differential"/>
</dbReference>
<dbReference type="GO" id="GO:0005923">
    <property type="term" value="C:bicellular tight junction"/>
    <property type="evidence" value="ECO:0000266"/>
    <property type="project" value="RGD"/>
</dbReference>
<dbReference type="GO" id="GO:0097128">
    <property type="term" value="C:cyclin D1-CDK4 complex"/>
    <property type="evidence" value="ECO:0000266"/>
    <property type="project" value="RGD"/>
</dbReference>
<dbReference type="GO" id="GO:0097131">
    <property type="term" value="C:cyclin D1-CDK6 complex"/>
    <property type="evidence" value="ECO:0000266"/>
    <property type="project" value="RGD"/>
</dbReference>
<dbReference type="GO" id="GO:0000307">
    <property type="term" value="C:cyclin-dependent protein kinase holoenzyme complex"/>
    <property type="evidence" value="ECO:0000250"/>
    <property type="project" value="UniProtKB"/>
</dbReference>
<dbReference type="GO" id="GO:0005737">
    <property type="term" value="C:cytoplasm"/>
    <property type="evidence" value="ECO:0000266"/>
    <property type="project" value="RGD"/>
</dbReference>
<dbReference type="GO" id="GO:0005815">
    <property type="term" value="C:microtubule organizing center"/>
    <property type="evidence" value="ECO:0000318"/>
    <property type="project" value="GO_Central"/>
</dbReference>
<dbReference type="GO" id="GO:0031965">
    <property type="term" value="C:nuclear membrane"/>
    <property type="evidence" value="ECO:0007669"/>
    <property type="project" value="UniProtKB-SubCell"/>
</dbReference>
<dbReference type="GO" id="GO:0005654">
    <property type="term" value="C:nucleoplasm"/>
    <property type="evidence" value="ECO:0007669"/>
    <property type="project" value="Ensembl"/>
</dbReference>
<dbReference type="GO" id="GO:0005634">
    <property type="term" value="C:nucleus"/>
    <property type="evidence" value="ECO:0000266"/>
    <property type="project" value="RGD"/>
</dbReference>
<dbReference type="GO" id="GO:0017053">
    <property type="term" value="C:transcription repressor complex"/>
    <property type="evidence" value="ECO:0000250"/>
    <property type="project" value="UniProtKB"/>
</dbReference>
<dbReference type="GO" id="GO:0061575">
    <property type="term" value="F:cyclin-dependent protein serine/threonine kinase activator activity"/>
    <property type="evidence" value="ECO:0000266"/>
    <property type="project" value="RGD"/>
</dbReference>
<dbReference type="GO" id="GO:0016538">
    <property type="term" value="F:cyclin-dependent protein serine/threonine kinase regulator activity"/>
    <property type="evidence" value="ECO:0000266"/>
    <property type="project" value="RGD"/>
</dbReference>
<dbReference type="GO" id="GO:0019899">
    <property type="term" value="F:enzyme binding"/>
    <property type="evidence" value="ECO:0000266"/>
    <property type="project" value="RGD"/>
</dbReference>
<dbReference type="GO" id="GO:0042826">
    <property type="term" value="F:histone deacetylase binding"/>
    <property type="evidence" value="ECO:0000266"/>
    <property type="project" value="RGD"/>
</dbReference>
<dbReference type="GO" id="GO:0016301">
    <property type="term" value="F:kinase activity"/>
    <property type="evidence" value="ECO:0000266"/>
    <property type="project" value="RGD"/>
</dbReference>
<dbReference type="GO" id="GO:0070064">
    <property type="term" value="F:proline-rich region binding"/>
    <property type="evidence" value="ECO:0000266"/>
    <property type="project" value="RGD"/>
</dbReference>
<dbReference type="GO" id="GO:0004672">
    <property type="term" value="F:protein kinase activity"/>
    <property type="evidence" value="ECO:0000266"/>
    <property type="project" value="RGD"/>
</dbReference>
<dbReference type="GO" id="GO:0019901">
    <property type="term" value="F:protein kinase binding"/>
    <property type="evidence" value="ECO:0000353"/>
    <property type="project" value="RGD"/>
</dbReference>
<dbReference type="GO" id="GO:0043539">
    <property type="term" value="F:protein serine/threonine kinase activator activity"/>
    <property type="evidence" value="ECO:0000250"/>
    <property type="project" value="UniProtKB"/>
</dbReference>
<dbReference type="GO" id="GO:0044877">
    <property type="term" value="F:protein-containing complex binding"/>
    <property type="evidence" value="ECO:0000353"/>
    <property type="project" value="RGD"/>
</dbReference>
<dbReference type="GO" id="GO:0003714">
    <property type="term" value="F:transcription corepressor activity"/>
    <property type="evidence" value="ECO:0000250"/>
    <property type="project" value="UniProtKB"/>
</dbReference>
<dbReference type="GO" id="GO:0031100">
    <property type="term" value="P:animal organ regeneration"/>
    <property type="evidence" value="ECO:0000270"/>
    <property type="project" value="RGD"/>
</dbReference>
<dbReference type="GO" id="GO:0051301">
    <property type="term" value="P:cell division"/>
    <property type="evidence" value="ECO:0007669"/>
    <property type="project" value="UniProtKB-KW"/>
</dbReference>
<dbReference type="GO" id="GO:0008283">
    <property type="term" value="P:cell population proliferation"/>
    <property type="evidence" value="ECO:0000266"/>
    <property type="project" value="RGD"/>
</dbReference>
<dbReference type="GO" id="GO:0006974">
    <property type="term" value="P:DNA damage response"/>
    <property type="evidence" value="ECO:0000250"/>
    <property type="project" value="UniProtKB"/>
</dbReference>
<dbReference type="GO" id="GO:0030968">
    <property type="term" value="P:endoplasmic reticulum unfolded protein response"/>
    <property type="evidence" value="ECO:0000266"/>
    <property type="project" value="RGD"/>
</dbReference>
<dbReference type="GO" id="GO:0045444">
    <property type="term" value="P:fat cell differentiation"/>
    <property type="evidence" value="ECO:0000266"/>
    <property type="project" value="RGD"/>
</dbReference>
<dbReference type="GO" id="GO:0000082">
    <property type="term" value="P:G1/S transition of mitotic cell cycle"/>
    <property type="evidence" value="ECO:0000250"/>
    <property type="project" value="UniProtKB"/>
</dbReference>
<dbReference type="GO" id="GO:0007595">
    <property type="term" value="P:lactation"/>
    <property type="evidence" value="ECO:0000266"/>
    <property type="project" value="RGD"/>
</dbReference>
<dbReference type="GO" id="GO:0033327">
    <property type="term" value="P:Leydig cell differentiation"/>
    <property type="evidence" value="ECO:0000315"/>
    <property type="project" value="RGD"/>
</dbReference>
<dbReference type="GO" id="GO:0001889">
    <property type="term" value="P:liver development"/>
    <property type="evidence" value="ECO:0000270"/>
    <property type="project" value="RGD"/>
</dbReference>
<dbReference type="GO" id="GO:0097421">
    <property type="term" value="P:liver regeneration"/>
    <property type="evidence" value="ECO:0000266"/>
    <property type="project" value="RGD"/>
</dbReference>
<dbReference type="GO" id="GO:0060749">
    <property type="term" value="P:mammary gland alveolus development"/>
    <property type="evidence" value="ECO:0000266"/>
    <property type="project" value="RGD"/>
</dbReference>
<dbReference type="GO" id="GO:0033598">
    <property type="term" value="P:mammary gland epithelial cell proliferation"/>
    <property type="evidence" value="ECO:0000266"/>
    <property type="project" value="RGD"/>
</dbReference>
<dbReference type="GO" id="GO:0031571">
    <property type="term" value="P:mitotic G1 DNA damage checkpoint signaling"/>
    <property type="evidence" value="ECO:0000250"/>
    <property type="project" value="UniProtKB"/>
</dbReference>
<dbReference type="GO" id="GO:0030857">
    <property type="term" value="P:negative regulation of epithelial cell differentiation"/>
    <property type="evidence" value="ECO:0000266"/>
    <property type="project" value="RGD"/>
</dbReference>
<dbReference type="GO" id="GO:0043524">
    <property type="term" value="P:negative regulation of neuron apoptotic process"/>
    <property type="evidence" value="ECO:0000266"/>
    <property type="project" value="RGD"/>
</dbReference>
<dbReference type="GO" id="GO:0000122">
    <property type="term" value="P:negative regulation of transcription by RNA polymerase II"/>
    <property type="evidence" value="ECO:0000250"/>
    <property type="project" value="UniProtKB"/>
</dbReference>
<dbReference type="GO" id="GO:0030182">
    <property type="term" value="P:neuron differentiation"/>
    <property type="evidence" value="ECO:0000266"/>
    <property type="project" value="RGD"/>
</dbReference>
<dbReference type="GO" id="GO:0008284">
    <property type="term" value="P:positive regulation of cell population proliferation"/>
    <property type="evidence" value="ECO:0000315"/>
    <property type="project" value="RGD"/>
</dbReference>
<dbReference type="GO" id="GO:1900087">
    <property type="term" value="P:positive regulation of G1/S transition of mitotic cell cycle"/>
    <property type="evidence" value="ECO:0000318"/>
    <property type="project" value="GO_Central"/>
</dbReference>
<dbReference type="GO" id="GO:0010971">
    <property type="term" value="P:positive regulation of G2/M transition of mitotic cell cycle"/>
    <property type="evidence" value="ECO:0000250"/>
    <property type="project" value="UniProtKB"/>
</dbReference>
<dbReference type="GO" id="GO:0033601">
    <property type="term" value="P:positive regulation of mammary gland epithelial cell proliferation"/>
    <property type="evidence" value="ECO:0000266"/>
    <property type="project" value="RGD"/>
</dbReference>
<dbReference type="GO" id="GO:0000320">
    <property type="term" value="P:re-entry into mitotic cell cycle"/>
    <property type="evidence" value="ECO:0000266"/>
    <property type="project" value="RGD"/>
</dbReference>
<dbReference type="GO" id="GO:0051726">
    <property type="term" value="P:regulation of cell cycle"/>
    <property type="evidence" value="ECO:0000266"/>
    <property type="project" value="RGD"/>
</dbReference>
<dbReference type="GO" id="GO:2000045">
    <property type="term" value="P:regulation of G1/S transition of mitotic cell cycle"/>
    <property type="evidence" value="ECO:0000266"/>
    <property type="project" value="RGD"/>
</dbReference>
<dbReference type="GO" id="GO:0051592">
    <property type="term" value="P:response to calcium ion"/>
    <property type="evidence" value="ECO:0000270"/>
    <property type="project" value="RGD"/>
</dbReference>
<dbReference type="GO" id="GO:0051412">
    <property type="term" value="P:response to corticosterone"/>
    <property type="evidence" value="ECO:0000270"/>
    <property type="project" value="RGD"/>
</dbReference>
<dbReference type="GO" id="GO:0032355">
    <property type="term" value="P:response to estradiol"/>
    <property type="evidence" value="ECO:0000270"/>
    <property type="project" value="RGD"/>
</dbReference>
<dbReference type="GO" id="GO:0043627">
    <property type="term" value="P:response to estrogen"/>
    <property type="evidence" value="ECO:0000270"/>
    <property type="project" value="RGD"/>
</dbReference>
<dbReference type="GO" id="GO:0045471">
    <property type="term" value="P:response to ethanol"/>
    <property type="evidence" value="ECO:0000270"/>
    <property type="project" value="RGD"/>
</dbReference>
<dbReference type="GO" id="GO:0051384">
    <property type="term" value="P:response to glucocorticoid"/>
    <property type="evidence" value="ECO:0000270"/>
    <property type="project" value="RGD"/>
</dbReference>
<dbReference type="GO" id="GO:0010039">
    <property type="term" value="P:response to iron ion"/>
    <property type="evidence" value="ECO:0000270"/>
    <property type="project" value="RGD"/>
</dbReference>
<dbReference type="GO" id="GO:0044321">
    <property type="term" value="P:response to leptin"/>
    <property type="evidence" value="ECO:0000266"/>
    <property type="project" value="RGD"/>
</dbReference>
<dbReference type="GO" id="GO:0032026">
    <property type="term" value="P:response to magnesium ion"/>
    <property type="evidence" value="ECO:0000270"/>
    <property type="project" value="RGD"/>
</dbReference>
<dbReference type="GO" id="GO:0048545">
    <property type="term" value="P:response to steroid hormone"/>
    <property type="evidence" value="ECO:0000270"/>
    <property type="project" value="RGD"/>
</dbReference>
<dbReference type="GO" id="GO:0070141">
    <property type="term" value="P:response to UV-A"/>
    <property type="evidence" value="ECO:0000250"/>
    <property type="project" value="UniProtKB"/>
</dbReference>
<dbReference type="GO" id="GO:0033197">
    <property type="term" value="P:response to vitamin E"/>
    <property type="evidence" value="ECO:0000270"/>
    <property type="project" value="RGD"/>
</dbReference>
<dbReference type="GO" id="GO:0010165">
    <property type="term" value="P:response to X-ray"/>
    <property type="evidence" value="ECO:0000270"/>
    <property type="project" value="RGD"/>
</dbReference>
<dbReference type="GO" id="GO:0009410">
    <property type="term" value="P:response to xenobiotic stimulus"/>
    <property type="evidence" value="ECO:0000270"/>
    <property type="project" value="RGD"/>
</dbReference>
<dbReference type="GO" id="GO:0016055">
    <property type="term" value="P:Wnt signaling pathway"/>
    <property type="evidence" value="ECO:0000266"/>
    <property type="project" value="RGD"/>
</dbReference>
<dbReference type="CDD" id="cd20573">
    <property type="entry name" value="CYCLIN_CCND1_rpt1"/>
    <property type="match status" value="1"/>
</dbReference>
<dbReference type="CDD" id="cd20576">
    <property type="entry name" value="CYCLIN_CCND1_rpt2"/>
    <property type="match status" value="1"/>
</dbReference>
<dbReference type="FunFam" id="1.10.472.10:FF:000120">
    <property type="entry name" value="G1/S-specific cyclin-D1"/>
    <property type="match status" value="1"/>
</dbReference>
<dbReference type="Gene3D" id="1.10.472.10">
    <property type="entry name" value="Cyclin-like"/>
    <property type="match status" value="2"/>
</dbReference>
<dbReference type="InterPro" id="IPR039361">
    <property type="entry name" value="Cyclin"/>
</dbReference>
<dbReference type="InterPro" id="IPR013763">
    <property type="entry name" value="Cyclin-like_dom"/>
</dbReference>
<dbReference type="InterPro" id="IPR036915">
    <property type="entry name" value="Cyclin-like_sf"/>
</dbReference>
<dbReference type="InterPro" id="IPR004367">
    <property type="entry name" value="Cyclin_C-dom"/>
</dbReference>
<dbReference type="InterPro" id="IPR006671">
    <property type="entry name" value="Cyclin_N"/>
</dbReference>
<dbReference type="InterPro" id="IPR048258">
    <property type="entry name" value="Cyclins_cyclin-box"/>
</dbReference>
<dbReference type="PANTHER" id="PTHR10177">
    <property type="entry name" value="CYCLINS"/>
    <property type="match status" value="1"/>
</dbReference>
<dbReference type="Pfam" id="PF02984">
    <property type="entry name" value="Cyclin_C"/>
    <property type="match status" value="1"/>
</dbReference>
<dbReference type="Pfam" id="PF00134">
    <property type="entry name" value="Cyclin_N"/>
    <property type="match status" value="1"/>
</dbReference>
<dbReference type="SMART" id="SM00385">
    <property type="entry name" value="CYCLIN"/>
    <property type="match status" value="2"/>
</dbReference>
<dbReference type="SMART" id="SM01332">
    <property type="entry name" value="Cyclin_C"/>
    <property type="match status" value="1"/>
</dbReference>
<dbReference type="SUPFAM" id="SSF47954">
    <property type="entry name" value="Cyclin-like"/>
    <property type="match status" value="2"/>
</dbReference>
<dbReference type="PROSITE" id="PS00292">
    <property type="entry name" value="CYCLINS"/>
    <property type="match status" value="1"/>
</dbReference>
<reference key="1">
    <citation type="journal article" date="1993" name="Oncogene">
        <title>Cyclin G: a new mammalian cyclin with homology to fission yeast Cig1.</title>
        <authorList>
            <person name="Tamura K."/>
            <person name="Kanaoka Y."/>
            <person name="Jinno S."/>
            <person name="Nagata A."/>
            <person name="Ogiso Y."/>
            <person name="Shimizu K."/>
            <person name="Hayakawa T."/>
            <person name="Nojima H."/>
            <person name="Okayama H."/>
        </authorList>
    </citation>
    <scope>NUCLEOTIDE SEQUENCE [MRNA]</scope>
    <source>
        <tissue>Kidney</tissue>
    </source>
</reference>
<reference key="2">
    <citation type="journal article" date="1994" name="Biochem. Biophys. Res. Commun.">
        <title>Calcium modulates the cyclin D1 expression in a rat parathyroid cell line.</title>
        <authorList>
            <person name="Bianchi S."/>
            <person name="Fabiani S."/>
            <person name="Muratori M."/>
            <person name="Arnold A."/>
            <person name="Sakaguchi K."/>
            <person name="Miki T."/>
            <person name="Brandi M.L."/>
        </authorList>
    </citation>
    <scope>NUCLEOTIDE SEQUENCE [MRNA]</scope>
</reference>
<accession>P39948</accession>
<keyword id="KW-0131">Cell cycle</keyword>
<keyword id="KW-0132">Cell division</keyword>
<keyword id="KW-0195">Cyclin</keyword>
<keyword id="KW-0963">Cytoplasm</keyword>
<keyword id="KW-1017">Isopeptide bond</keyword>
<keyword id="KW-0472">Membrane</keyword>
<keyword id="KW-0539">Nucleus</keyword>
<keyword id="KW-0597">Phosphoprotein</keyword>
<keyword id="KW-1185">Reference proteome</keyword>
<keyword id="KW-0678">Repressor</keyword>
<keyword id="KW-0804">Transcription</keyword>
<keyword id="KW-0805">Transcription regulation</keyword>
<keyword id="KW-0832">Ubl conjugation</keyword>